<reference key="1">
    <citation type="journal article" date="2001" name="J. Bacteriol.">
        <title>Genome of the bacterium Streptococcus pneumoniae strain R6.</title>
        <authorList>
            <person name="Hoskins J."/>
            <person name="Alborn W.E. Jr."/>
            <person name="Arnold J."/>
            <person name="Blaszczak L.C."/>
            <person name="Burgett S."/>
            <person name="DeHoff B.S."/>
            <person name="Estrem S.T."/>
            <person name="Fritz L."/>
            <person name="Fu D.-J."/>
            <person name="Fuller W."/>
            <person name="Geringer C."/>
            <person name="Gilmour R."/>
            <person name="Glass J.S."/>
            <person name="Khoja H."/>
            <person name="Kraft A.R."/>
            <person name="Lagace R.E."/>
            <person name="LeBlanc D.J."/>
            <person name="Lee L.N."/>
            <person name="Lefkowitz E.J."/>
            <person name="Lu J."/>
            <person name="Matsushima P."/>
            <person name="McAhren S.M."/>
            <person name="McHenney M."/>
            <person name="McLeaster K."/>
            <person name="Mundy C.W."/>
            <person name="Nicas T.I."/>
            <person name="Norris F.H."/>
            <person name="O'Gara M."/>
            <person name="Peery R.B."/>
            <person name="Robertson G.T."/>
            <person name="Rockey P."/>
            <person name="Sun P.-M."/>
            <person name="Winkler M.E."/>
            <person name="Yang Y."/>
            <person name="Young-Bellido M."/>
            <person name="Zhao G."/>
            <person name="Zook C.A."/>
            <person name="Baltz R.H."/>
            <person name="Jaskunas S.R."/>
            <person name="Rosteck P.R. Jr."/>
            <person name="Skatrud P.L."/>
            <person name="Glass J.I."/>
        </authorList>
    </citation>
    <scope>NUCLEOTIDE SEQUENCE [LARGE SCALE GENOMIC DNA]</scope>
    <source>
        <strain>ATCC BAA-255 / R6</strain>
    </source>
</reference>
<sequence>MKEIIEKLAKFENLSGVEMTDVIERIVTGRVTEAQIASLLLALKMKGETPEERTAIAQVMRGHAQHIPTEIHDAMDNCGTGGDKSFSFNISTTAAFVLAGGGIHMAKHGNRSISSKSGSADVLEALGINLDLKPAELGKVFDKTGIVFLFAKNMHPAMKYIMPARLELGIPTIMNLTGPLIHPMALETQLLGISRPELLESTAQVLKNMGRKRAIVVAGPEGLDEAGLNGTTKIALLENGEISLSSFTPEDLGMEGYAMEDIRGGNAQENAEILLSVLKNEASPFLETTVLNAGLGFYANGKIDSIKEGVALARQVIARGKALEKLRLLQEYQK</sequence>
<dbReference type="EC" id="2.4.2.18" evidence="1"/>
<dbReference type="EMBL" id="AE007317">
    <property type="protein sequence ID" value="AAL00438.1"/>
    <property type="molecule type" value="Genomic_DNA"/>
</dbReference>
<dbReference type="PIR" id="A98076">
    <property type="entry name" value="A98076"/>
</dbReference>
<dbReference type="RefSeq" id="NP_359227.1">
    <property type="nucleotide sequence ID" value="NC_003098.1"/>
</dbReference>
<dbReference type="RefSeq" id="WP_000658684.1">
    <property type="nucleotide sequence ID" value="NC_003098.1"/>
</dbReference>
<dbReference type="SMR" id="P67000"/>
<dbReference type="STRING" id="171101.spr1635"/>
<dbReference type="GeneID" id="45652966"/>
<dbReference type="KEGG" id="spr:spr1635"/>
<dbReference type="PATRIC" id="fig|171101.6.peg.1764"/>
<dbReference type="eggNOG" id="COG0547">
    <property type="taxonomic scope" value="Bacteria"/>
</dbReference>
<dbReference type="HOGENOM" id="CLU_034315_2_1_9"/>
<dbReference type="UniPathway" id="UPA00035">
    <property type="reaction ID" value="UER00041"/>
</dbReference>
<dbReference type="Proteomes" id="UP000000586">
    <property type="component" value="Chromosome"/>
</dbReference>
<dbReference type="GO" id="GO:0005829">
    <property type="term" value="C:cytosol"/>
    <property type="evidence" value="ECO:0000318"/>
    <property type="project" value="GO_Central"/>
</dbReference>
<dbReference type="GO" id="GO:0004048">
    <property type="term" value="F:anthranilate phosphoribosyltransferase activity"/>
    <property type="evidence" value="ECO:0007669"/>
    <property type="project" value="UniProtKB-UniRule"/>
</dbReference>
<dbReference type="GO" id="GO:0000287">
    <property type="term" value="F:magnesium ion binding"/>
    <property type="evidence" value="ECO:0007669"/>
    <property type="project" value="UniProtKB-UniRule"/>
</dbReference>
<dbReference type="GO" id="GO:0000162">
    <property type="term" value="P:L-tryptophan biosynthetic process"/>
    <property type="evidence" value="ECO:0000318"/>
    <property type="project" value="GO_Central"/>
</dbReference>
<dbReference type="FunFam" id="3.40.1030.10:FF:000002">
    <property type="entry name" value="Anthranilate phosphoribosyltransferase"/>
    <property type="match status" value="1"/>
</dbReference>
<dbReference type="Gene3D" id="3.40.1030.10">
    <property type="entry name" value="Nucleoside phosphorylase/phosphoribosyltransferase catalytic domain"/>
    <property type="match status" value="1"/>
</dbReference>
<dbReference type="Gene3D" id="1.20.970.10">
    <property type="entry name" value="Transferase, Pyrimidine Nucleoside Phosphorylase, Chain C"/>
    <property type="match status" value="1"/>
</dbReference>
<dbReference type="HAMAP" id="MF_00211">
    <property type="entry name" value="TrpD"/>
    <property type="match status" value="1"/>
</dbReference>
<dbReference type="InterPro" id="IPR005940">
    <property type="entry name" value="Anthranilate_Pribosyl_Tfrase"/>
</dbReference>
<dbReference type="InterPro" id="IPR000312">
    <property type="entry name" value="Glycosyl_Trfase_fam3"/>
</dbReference>
<dbReference type="InterPro" id="IPR017459">
    <property type="entry name" value="Glycosyl_Trfase_fam3_N_dom"/>
</dbReference>
<dbReference type="InterPro" id="IPR036320">
    <property type="entry name" value="Glycosyl_Trfase_fam3_N_dom_sf"/>
</dbReference>
<dbReference type="InterPro" id="IPR035902">
    <property type="entry name" value="Nuc_phospho_transferase"/>
</dbReference>
<dbReference type="NCBIfam" id="TIGR01245">
    <property type="entry name" value="trpD"/>
    <property type="match status" value="1"/>
</dbReference>
<dbReference type="PANTHER" id="PTHR43285">
    <property type="entry name" value="ANTHRANILATE PHOSPHORIBOSYLTRANSFERASE"/>
    <property type="match status" value="1"/>
</dbReference>
<dbReference type="PANTHER" id="PTHR43285:SF2">
    <property type="entry name" value="ANTHRANILATE PHOSPHORIBOSYLTRANSFERASE"/>
    <property type="match status" value="1"/>
</dbReference>
<dbReference type="Pfam" id="PF02885">
    <property type="entry name" value="Glycos_trans_3N"/>
    <property type="match status" value="1"/>
</dbReference>
<dbReference type="Pfam" id="PF00591">
    <property type="entry name" value="Glycos_transf_3"/>
    <property type="match status" value="1"/>
</dbReference>
<dbReference type="SUPFAM" id="SSF52418">
    <property type="entry name" value="Nucleoside phosphorylase/phosphoribosyltransferase catalytic domain"/>
    <property type="match status" value="1"/>
</dbReference>
<dbReference type="SUPFAM" id="SSF47648">
    <property type="entry name" value="Nucleoside phosphorylase/phosphoribosyltransferase N-terminal domain"/>
    <property type="match status" value="1"/>
</dbReference>
<comment type="function">
    <text evidence="1">Catalyzes the transfer of the phosphoribosyl group of 5-phosphorylribose-1-pyrophosphate (PRPP) to anthranilate to yield N-(5'-phosphoribosyl)-anthranilate (PRA).</text>
</comment>
<comment type="catalytic activity">
    <reaction evidence="1">
        <text>N-(5-phospho-beta-D-ribosyl)anthranilate + diphosphate = 5-phospho-alpha-D-ribose 1-diphosphate + anthranilate</text>
        <dbReference type="Rhea" id="RHEA:11768"/>
        <dbReference type="ChEBI" id="CHEBI:16567"/>
        <dbReference type="ChEBI" id="CHEBI:18277"/>
        <dbReference type="ChEBI" id="CHEBI:33019"/>
        <dbReference type="ChEBI" id="CHEBI:58017"/>
        <dbReference type="EC" id="2.4.2.18"/>
    </reaction>
</comment>
<comment type="cofactor">
    <cofactor evidence="1">
        <name>Mg(2+)</name>
        <dbReference type="ChEBI" id="CHEBI:18420"/>
    </cofactor>
    <text evidence="1">Binds 2 magnesium ions per monomer.</text>
</comment>
<comment type="pathway">
    <text evidence="1">Amino-acid biosynthesis; L-tryptophan biosynthesis; L-tryptophan from chorismate: step 2/5.</text>
</comment>
<comment type="subunit">
    <text evidence="1">Homodimer.</text>
</comment>
<comment type="similarity">
    <text evidence="1">Belongs to the anthranilate phosphoribosyltransferase family.</text>
</comment>
<accession>P67000</accession>
<accession>Q97P29</accession>
<proteinExistence type="inferred from homology"/>
<protein>
    <recommendedName>
        <fullName evidence="1">Anthranilate phosphoribosyltransferase</fullName>
        <ecNumber evidence="1">2.4.2.18</ecNumber>
    </recommendedName>
</protein>
<feature type="chain" id="PRO_0000154493" description="Anthranilate phosphoribosyltransferase">
    <location>
        <begin position="1"/>
        <end position="334"/>
    </location>
</feature>
<feature type="binding site" evidence="1">
    <location>
        <position position="79"/>
    </location>
    <ligand>
        <name>5-phospho-alpha-D-ribose 1-diphosphate</name>
        <dbReference type="ChEBI" id="CHEBI:58017"/>
    </ligand>
</feature>
<feature type="binding site" evidence="1">
    <location>
        <position position="79"/>
    </location>
    <ligand>
        <name>anthranilate</name>
        <dbReference type="ChEBI" id="CHEBI:16567"/>
        <label>1</label>
    </ligand>
</feature>
<feature type="binding site" evidence="1">
    <location>
        <begin position="82"/>
        <end position="83"/>
    </location>
    <ligand>
        <name>5-phospho-alpha-D-ribose 1-diphosphate</name>
        <dbReference type="ChEBI" id="CHEBI:58017"/>
    </ligand>
</feature>
<feature type="binding site" evidence="1">
    <location>
        <position position="87"/>
    </location>
    <ligand>
        <name>5-phospho-alpha-D-ribose 1-diphosphate</name>
        <dbReference type="ChEBI" id="CHEBI:58017"/>
    </ligand>
</feature>
<feature type="binding site" evidence="1">
    <location>
        <begin position="89"/>
        <end position="92"/>
    </location>
    <ligand>
        <name>5-phospho-alpha-D-ribose 1-diphosphate</name>
        <dbReference type="ChEBI" id="CHEBI:58017"/>
    </ligand>
</feature>
<feature type="binding site" evidence="1">
    <location>
        <position position="91"/>
    </location>
    <ligand>
        <name>Mg(2+)</name>
        <dbReference type="ChEBI" id="CHEBI:18420"/>
        <label>1</label>
    </ligand>
</feature>
<feature type="binding site" evidence="1">
    <location>
        <begin position="107"/>
        <end position="115"/>
    </location>
    <ligand>
        <name>5-phospho-alpha-D-ribose 1-diphosphate</name>
        <dbReference type="ChEBI" id="CHEBI:58017"/>
    </ligand>
</feature>
<feature type="binding site" evidence="1">
    <location>
        <position position="110"/>
    </location>
    <ligand>
        <name>anthranilate</name>
        <dbReference type="ChEBI" id="CHEBI:16567"/>
        <label>1</label>
    </ligand>
</feature>
<feature type="binding site" evidence="1">
    <location>
        <position position="119"/>
    </location>
    <ligand>
        <name>5-phospho-alpha-D-ribose 1-diphosphate</name>
        <dbReference type="ChEBI" id="CHEBI:58017"/>
    </ligand>
</feature>
<feature type="binding site" evidence="1">
    <location>
        <position position="165"/>
    </location>
    <ligand>
        <name>anthranilate</name>
        <dbReference type="ChEBI" id="CHEBI:16567"/>
        <label>2</label>
    </ligand>
</feature>
<feature type="binding site" evidence="1">
    <location>
        <position position="224"/>
    </location>
    <ligand>
        <name>Mg(2+)</name>
        <dbReference type="ChEBI" id="CHEBI:18420"/>
        <label>2</label>
    </ligand>
</feature>
<feature type="binding site" evidence="1">
    <location>
        <position position="225"/>
    </location>
    <ligand>
        <name>Mg(2+)</name>
        <dbReference type="ChEBI" id="CHEBI:18420"/>
        <label>1</label>
    </ligand>
</feature>
<feature type="binding site" evidence="1">
    <location>
        <position position="225"/>
    </location>
    <ligand>
        <name>Mg(2+)</name>
        <dbReference type="ChEBI" id="CHEBI:18420"/>
        <label>2</label>
    </ligand>
</feature>
<gene>
    <name evidence="1" type="primary">trpD</name>
    <name type="ordered locus">spr1635</name>
</gene>
<evidence type="ECO:0000255" key="1">
    <source>
        <dbReference type="HAMAP-Rule" id="MF_00211"/>
    </source>
</evidence>
<keyword id="KW-0028">Amino-acid biosynthesis</keyword>
<keyword id="KW-0057">Aromatic amino acid biosynthesis</keyword>
<keyword id="KW-0328">Glycosyltransferase</keyword>
<keyword id="KW-0460">Magnesium</keyword>
<keyword id="KW-0479">Metal-binding</keyword>
<keyword id="KW-1185">Reference proteome</keyword>
<keyword id="KW-0808">Transferase</keyword>
<keyword id="KW-0822">Tryptophan biosynthesis</keyword>
<name>TRPD_STRR6</name>
<organism>
    <name type="scientific">Streptococcus pneumoniae (strain ATCC BAA-255 / R6)</name>
    <dbReference type="NCBI Taxonomy" id="171101"/>
    <lineage>
        <taxon>Bacteria</taxon>
        <taxon>Bacillati</taxon>
        <taxon>Bacillota</taxon>
        <taxon>Bacilli</taxon>
        <taxon>Lactobacillales</taxon>
        <taxon>Streptococcaceae</taxon>
        <taxon>Streptococcus</taxon>
    </lineage>
</organism>